<dbReference type="EC" id="3.6.1.9" evidence="1"/>
<dbReference type="EMBL" id="CP000111">
    <property type="protein sequence ID" value="ABB50317.1"/>
    <property type="molecule type" value="Genomic_DNA"/>
</dbReference>
<dbReference type="RefSeq" id="WP_011376804.1">
    <property type="nucleotide sequence ID" value="NC_007577.1"/>
</dbReference>
<dbReference type="SMR" id="Q319X8"/>
<dbReference type="STRING" id="74546.PMT9312_1258"/>
<dbReference type="KEGG" id="pmi:PMT9312_1258"/>
<dbReference type="eggNOG" id="COG0424">
    <property type="taxonomic scope" value="Bacteria"/>
</dbReference>
<dbReference type="HOGENOM" id="CLU_040416_1_2_3"/>
<dbReference type="OrthoDB" id="9807767at2"/>
<dbReference type="Proteomes" id="UP000002715">
    <property type="component" value="Chromosome"/>
</dbReference>
<dbReference type="GO" id="GO:0005737">
    <property type="term" value="C:cytoplasm"/>
    <property type="evidence" value="ECO:0007669"/>
    <property type="project" value="UniProtKB-SubCell"/>
</dbReference>
<dbReference type="GO" id="GO:0047429">
    <property type="term" value="F:nucleoside triphosphate diphosphatase activity"/>
    <property type="evidence" value="ECO:0007669"/>
    <property type="project" value="UniProtKB-EC"/>
</dbReference>
<dbReference type="GO" id="GO:0009117">
    <property type="term" value="P:nucleotide metabolic process"/>
    <property type="evidence" value="ECO:0007669"/>
    <property type="project" value="UniProtKB-KW"/>
</dbReference>
<dbReference type="CDD" id="cd00555">
    <property type="entry name" value="Maf"/>
    <property type="match status" value="1"/>
</dbReference>
<dbReference type="Gene3D" id="3.90.950.10">
    <property type="match status" value="1"/>
</dbReference>
<dbReference type="HAMAP" id="MF_00528">
    <property type="entry name" value="Maf"/>
    <property type="match status" value="1"/>
</dbReference>
<dbReference type="InterPro" id="IPR029001">
    <property type="entry name" value="ITPase-like_fam"/>
</dbReference>
<dbReference type="InterPro" id="IPR003697">
    <property type="entry name" value="Maf-like"/>
</dbReference>
<dbReference type="NCBIfam" id="TIGR00172">
    <property type="entry name" value="maf"/>
    <property type="match status" value="1"/>
</dbReference>
<dbReference type="PANTHER" id="PTHR43213">
    <property type="entry name" value="BIFUNCTIONAL DTTP/UTP PYROPHOSPHATASE/METHYLTRANSFERASE PROTEIN-RELATED"/>
    <property type="match status" value="1"/>
</dbReference>
<dbReference type="PANTHER" id="PTHR43213:SF5">
    <property type="entry name" value="BIFUNCTIONAL DTTP_UTP PYROPHOSPHATASE_METHYLTRANSFERASE PROTEIN-RELATED"/>
    <property type="match status" value="1"/>
</dbReference>
<dbReference type="Pfam" id="PF02545">
    <property type="entry name" value="Maf"/>
    <property type="match status" value="1"/>
</dbReference>
<dbReference type="PIRSF" id="PIRSF006305">
    <property type="entry name" value="Maf"/>
    <property type="match status" value="1"/>
</dbReference>
<dbReference type="SUPFAM" id="SSF52972">
    <property type="entry name" value="ITPase-like"/>
    <property type="match status" value="1"/>
</dbReference>
<proteinExistence type="inferred from homology"/>
<comment type="function">
    <text evidence="1">Nucleoside triphosphate pyrophosphatase. May have a dual role in cell division arrest and in preventing the incorporation of modified nucleotides into cellular nucleic acids.</text>
</comment>
<comment type="catalytic activity">
    <reaction evidence="1">
        <text>a ribonucleoside 5'-triphosphate + H2O = a ribonucleoside 5'-phosphate + diphosphate + H(+)</text>
        <dbReference type="Rhea" id="RHEA:23996"/>
        <dbReference type="ChEBI" id="CHEBI:15377"/>
        <dbReference type="ChEBI" id="CHEBI:15378"/>
        <dbReference type="ChEBI" id="CHEBI:33019"/>
        <dbReference type="ChEBI" id="CHEBI:58043"/>
        <dbReference type="ChEBI" id="CHEBI:61557"/>
        <dbReference type="EC" id="3.6.1.9"/>
    </reaction>
</comment>
<comment type="catalytic activity">
    <reaction evidence="1">
        <text>a 2'-deoxyribonucleoside 5'-triphosphate + H2O = a 2'-deoxyribonucleoside 5'-phosphate + diphosphate + H(+)</text>
        <dbReference type="Rhea" id="RHEA:44644"/>
        <dbReference type="ChEBI" id="CHEBI:15377"/>
        <dbReference type="ChEBI" id="CHEBI:15378"/>
        <dbReference type="ChEBI" id="CHEBI:33019"/>
        <dbReference type="ChEBI" id="CHEBI:61560"/>
        <dbReference type="ChEBI" id="CHEBI:65317"/>
        <dbReference type="EC" id="3.6.1.9"/>
    </reaction>
</comment>
<comment type="cofactor">
    <cofactor evidence="1">
        <name>a divalent metal cation</name>
        <dbReference type="ChEBI" id="CHEBI:60240"/>
    </cofactor>
</comment>
<comment type="subcellular location">
    <subcellularLocation>
        <location evidence="1">Cytoplasm</location>
    </subcellularLocation>
</comment>
<comment type="similarity">
    <text evidence="1">Belongs to the Maf family.</text>
</comment>
<gene>
    <name type="ordered locus">PMT9312_1258</name>
</gene>
<feature type="chain" id="PRO_0000267370" description="Nucleoside triphosphate pyrophosphatase">
    <location>
        <begin position="1"/>
        <end position="206"/>
    </location>
</feature>
<feature type="active site" description="Proton acceptor" evidence="1">
    <location>
        <position position="78"/>
    </location>
</feature>
<keyword id="KW-0963">Cytoplasm</keyword>
<keyword id="KW-0378">Hydrolase</keyword>
<keyword id="KW-0546">Nucleotide metabolism</keyword>
<name>NTPP_PROM9</name>
<protein>
    <recommendedName>
        <fullName evidence="1">Nucleoside triphosphate pyrophosphatase</fullName>
        <ecNumber evidence="1">3.6.1.9</ecNumber>
    </recommendedName>
    <alternativeName>
        <fullName evidence="1">Nucleotide pyrophosphatase</fullName>
        <shortName evidence="1">Nucleotide PPase</shortName>
    </alternativeName>
</protein>
<sequence length="206" mass="23219">MLILASASQSRKKLLENCQIEFIQISSNFDETSIKEKNIFNLALELSFQKANSLSKSIKKISLPEEINYGPLGILGCDSIFEFKGEAYGKPSDKAEAFIRWKKMSGEFGFLHTGHTLIIGNFDSTSNIFKITDTIKKTVSSRVYFSKLEDWEIKTYIDTNEPLYCAGGFALEGIGGKYIEKIEGCFSNVMGLSLPWLRKNLLKQKI</sequence>
<evidence type="ECO:0000255" key="1">
    <source>
        <dbReference type="HAMAP-Rule" id="MF_00528"/>
    </source>
</evidence>
<reference key="1">
    <citation type="journal article" date="2006" name="Science">
        <title>Genomic islands and the ecology and evolution of Prochlorococcus.</title>
        <authorList>
            <person name="Coleman M.L."/>
            <person name="Sullivan M.B."/>
            <person name="Martiny A.C."/>
            <person name="Steglich C."/>
            <person name="Barry K."/>
            <person name="Delong E.F."/>
            <person name="Chisholm S.W."/>
        </authorList>
    </citation>
    <scope>NUCLEOTIDE SEQUENCE [LARGE SCALE GENOMIC DNA]</scope>
    <source>
        <strain>MIT 9312</strain>
    </source>
</reference>
<accession>Q319X8</accession>
<organism>
    <name type="scientific">Prochlorococcus marinus (strain MIT 9312)</name>
    <dbReference type="NCBI Taxonomy" id="74546"/>
    <lineage>
        <taxon>Bacteria</taxon>
        <taxon>Bacillati</taxon>
        <taxon>Cyanobacteriota</taxon>
        <taxon>Cyanophyceae</taxon>
        <taxon>Synechococcales</taxon>
        <taxon>Prochlorococcaceae</taxon>
        <taxon>Prochlorococcus</taxon>
    </lineage>
</organism>